<keyword id="KW-1185">Reference proteome</keyword>
<keyword id="KW-0687">Ribonucleoprotein</keyword>
<keyword id="KW-0689">Ribosomal protein</keyword>
<keyword id="KW-0694">RNA-binding</keyword>
<keyword id="KW-0699">rRNA-binding</keyword>
<dbReference type="EMBL" id="CP000851">
    <property type="protein sequence ID" value="ABV85504.1"/>
    <property type="molecule type" value="Genomic_DNA"/>
</dbReference>
<dbReference type="RefSeq" id="WP_012153450.1">
    <property type="nucleotide sequence ID" value="NC_009901.1"/>
</dbReference>
<dbReference type="STRING" id="398579.Spea_0175"/>
<dbReference type="KEGG" id="spl:Spea_0175"/>
<dbReference type="eggNOG" id="COG0244">
    <property type="taxonomic scope" value="Bacteria"/>
</dbReference>
<dbReference type="HOGENOM" id="CLU_092227_0_2_6"/>
<dbReference type="OrthoDB" id="9808307at2"/>
<dbReference type="Proteomes" id="UP000002608">
    <property type="component" value="Chromosome"/>
</dbReference>
<dbReference type="GO" id="GO:0015934">
    <property type="term" value="C:large ribosomal subunit"/>
    <property type="evidence" value="ECO:0007669"/>
    <property type="project" value="InterPro"/>
</dbReference>
<dbReference type="GO" id="GO:0070180">
    <property type="term" value="F:large ribosomal subunit rRNA binding"/>
    <property type="evidence" value="ECO:0007669"/>
    <property type="project" value="UniProtKB-UniRule"/>
</dbReference>
<dbReference type="GO" id="GO:0003735">
    <property type="term" value="F:structural constituent of ribosome"/>
    <property type="evidence" value="ECO:0007669"/>
    <property type="project" value="InterPro"/>
</dbReference>
<dbReference type="GO" id="GO:0006412">
    <property type="term" value="P:translation"/>
    <property type="evidence" value="ECO:0007669"/>
    <property type="project" value="UniProtKB-UniRule"/>
</dbReference>
<dbReference type="CDD" id="cd05797">
    <property type="entry name" value="Ribosomal_L10"/>
    <property type="match status" value="1"/>
</dbReference>
<dbReference type="FunFam" id="3.30.70.1730:FF:000001">
    <property type="entry name" value="50S ribosomal protein L10"/>
    <property type="match status" value="1"/>
</dbReference>
<dbReference type="Gene3D" id="3.30.70.1730">
    <property type="match status" value="1"/>
</dbReference>
<dbReference type="Gene3D" id="6.10.250.2350">
    <property type="match status" value="1"/>
</dbReference>
<dbReference type="HAMAP" id="MF_00362">
    <property type="entry name" value="Ribosomal_uL10"/>
    <property type="match status" value="1"/>
</dbReference>
<dbReference type="InterPro" id="IPR001790">
    <property type="entry name" value="Ribosomal_uL10"/>
</dbReference>
<dbReference type="InterPro" id="IPR043141">
    <property type="entry name" value="Ribosomal_uL10-like_sf"/>
</dbReference>
<dbReference type="InterPro" id="IPR022973">
    <property type="entry name" value="Ribosomal_uL10_bac"/>
</dbReference>
<dbReference type="InterPro" id="IPR047865">
    <property type="entry name" value="Ribosomal_uL10_bac_type"/>
</dbReference>
<dbReference type="InterPro" id="IPR002363">
    <property type="entry name" value="Ribosomal_uL10_CS_bac"/>
</dbReference>
<dbReference type="NCBIfam" id="NF000955">
    <property type="entry name" value="PRK00099.1-1"/>
    <property type="match status" value="1"/>
</dbReference>
<dbReference type="PANTHER" id="PTHR11560">
    <property type="entry name" value="39S RIBOSOMAL PROTEIN L10, MITOCHONDRIAL"/>
    <property type="match status" value="1"/>
</dbReference>
<dbReference type="Pfam" id="PF00466">
    <property type="entry name" value="Ribosomal_L10"/>
    <property type="match status" value="1"/>
</dbReference>
<dbReference type="SUPFAM" id="SSF160369">
    <property type="entry name" value="Ribosomal protein L10-like"/>
    <property type="match status" value="1"/>
</dbReference>
<dbReference type="PROSITE" id="PS01109">
    <property type="entry name" value="RIBOSOMAL_L10"/>
    <property type="match status" value="1"/>
</dbReference>
<comment type="function">
    <text evidence="1">Forms part of the ribosomal stalk, playing a central role in the interaction of the ribosome with GTP-bound translation factors.</text>
</comment>
<comment type="subunit">
    <text evidence="1">Part of the ribosomal stalk of the 50S ribosomal subunit. The N-terminus interacts with L11 and the large rRNA to form the base of the stalk. The C-terminus forms an elongated spine to which L12 dimers bind in a sequential fashion forming a multimeric L10(L12)X complex.</text>
</comment>
<comment type="similarity">
    <text evidence="1">Belongs to the universal ribosomal protein uL10 family.</text>
</comment>
<protein>
    <recommendedName>
        <fullName evidence="1">Large ribosomal subunit protein uL10</fullName>
    </recommendedName>
    <alternativeName>
        <fullName evidence="2">50S ribosomal protein L10</fullName>
    </alternativeName>
</protein>
<accession>A8GYW7</accession>
<feature type="chain" id="PRO_1000079562" description="Large ribosomal subunit protein uL10">
    <location>
        <begin position="1"/>
        <end position="165"/>
    </location>
</feature>
<reference key="1">
    <citation type="submission" date="2007-10" db="EMBL/GenBank/DDBJ databases">
        <title>Complete sequence of Shewanella pealeana ATCC 700345.</title>
        <authorList>
            <consortium name="US DOE Joint Genome Institute"/>
            <person name="Copeland A."/>
            <person name="Lucas S."/>
            <person name="Lapidus A."/>
            <person name="Barry K."/>
            <person name="Glavina del Rio T."/>
            <person name="Dalin E."/>
            <person name="Tice H."/>
            <person name="Pitluck S."/>
            <person name="Chertkov O."/>
            <person name="Brettin T."/>
            <person name="Bruce D."/>
            <person name="Detter J.C."/>
            <person name="Han C."/>
            <person name="Schmutz J."/>
            <person name="Larimer F."/>
            <person name="Land M."/>
            <person name="Hauser L."/>
            <person name="Kyrpides N."/>
            <person name="Kim E."/>
            <person name="Zhao J.-S.Z."/>
            <person name="Manno D."/>
            <person name="Hawari J."/>
            <person name="Richardson P."/>
        </authorList>
    </citation>
    <scope>NUCLEOTIDE SEQUENCE [LARGE SCALE GENOMIC DNA]</scope>
    <source>
        <strain>ATCC 700345 / ANG-SQ1</strain>
    </source>
</reference>
<organism>
    <name type="scientific">Shewanella pealeana (strain ATCC 700345 / ANG-SQ1)</name>
    <dbReference type="NCBI Taxonomy" id="398579"/>
    <lineage>
        <taxon>Bacteria</taxon>
        <taxon>Pseudomonadati</taxon>
        <taxon>Pseudomonadota</taxon>
        <taxon>Gammaproteobacteria</taxon>
        <taxon>Alteromonadales</taxon>
        <taxon>Shewanellaceae</taxon>
        <taxon>Shewanella</taxon>
    </lineage>
</organism>
<proteinExistence type="inferred from homology"/>
<evidence type="ECO:0000255" key="1">
    <source>
        <dbReference type="HAMAP-Rule" id="MF_00362"/>
    </source>
</evidence>
<evidence type="ECO:0000305" key="2"/>
<sequence length="165" mass="17615">MALGLEDKKAIVAEVNEAAKGALSAVVADSRGVTVANMTGLRKAAREAGVYIRVVRNTLVKRAVAGTDFECLSDTFTGPTLIAFSSEHPGAAARLLKDFAKAQEKFEIKAAAFEGELIPAENIDRLAKLPTYEEALAQFMMTLKEASAGKFVRTLAALRDQKEAA</sequence>
<name>RL10_SHEPA</name>
<gene>
    <name evidence="1" type="primary">rplJ</name>
    <name type="ordered locus">Spea_0175</name>
</gene>